<name>ABHD1_RAT</name>
<proteinExistence type="evidence at transcript level"/>
<reference key="1">
    <citation type="journal article" date="2004" name="Genome Res.">
        <title>The status, quality, and expansion of the NIH full-length cDNA project: the Mammalian Gene Collection (MGC).</title>
        <authorList>
            <consortium name="The MGC Project Team"/>
        </authorList>
    </citation>
    <scope>NUCLEOTIDE SEQUENCE [LARGE SCALE MRNA]</scope>
    <source>
        <tissue>Ovary</tissue>
    </source>
</reference>
<feature type="chain" id="PRO_0000280206" description="Protein ABHD1">
    <location>
        <begin position="1"/>
        <end position="412"/>
    </location>
</feature>
<feature type="transmembrane region" description="Helical; Signal-anchor for type II membrane protein" evidence="2">
    <location>
        <begin position="24"/>
        <end position="44"/>
    </location>
</feature>
<feature type="domain" description="AB hydrolase-1" evidence="2">
    <location>
        <begin position="131"/>
        <end position="372"/>
    </location>
</feature>
<feature type="active site" description="Charge relay system" evidence="1">
    <location>
        <position position="211"/>
    </location>
</feature>
<feature type="active site" description="Charge relay system" evidence="1">
    <location>
        <position position="337"/>
    </location>
</feature>
<feature type="active site" description="Charge relay system" evidence="1">
    <location>
        <position position="366"/>
    </location>
</feature>
<feature type="glycosylation site" description="N-linked (GlcNAc...) asparagine" evidence="2">
    <location>
        <position position="18"/>
    </location>
</feature>
<accession>Q5RK23</accession>
<organism>
    <name type="scientific">Rattus norvegicus</name>
    <name type="common">Rat</name>
    <dbReference type="NCBI Taxonomy" id="10116"/>
    <lineage>
        <taxon>Eukaryota</taxon>
        <taxon>Metazoa</taxon>
        <taxon>Chordata</taxon>
        <taxon>Craniata</taxon>
        <taxon>Vertebrata</taxon>
        <taxon>Euteleostomi</taxon>
        <taxon>Mammalia</taxon>
        <taxon>Eutheria</taxon>
        <taxon>Euarchontoglires</taxon>
        <taxon>Glires</taxon>
        <taxon>Rodentia</taxon>
        <taxon>Myomorpha</taxon>
        <taxon>Muroidea</taxon>
        <taxon>Muridae</taxon>
        <taxon>Murinae</taxon>
        <taxon>Rattus</taxon>
    </lineage>
</organism>
<comment type="subcellular location">
    <subcellularLocation>
        <location evidence="3">Membrane</location>
        <topology evidence="3">Single-pass type II membrane protein</topology>
    </subcellularLocation>
</comment>
<comment type="similarity">
    <text evidence="3">Belongs to the AB hydrolase superfamily. AB hydrolase 4 family.</text>
</comment>
<dbReference type="EC" id="3.1.1.-"/>
<dbReference type="EMBL" id="BC086351">
    <property type="protein sequence ID" value="AAH86351.1"/>
    <property type="molecule type" value="mRNA"/>
</dbReference>
<dbReference type="RefSeq" id="NP_001008520.1">
    <property type="nucleotide sequence ID" value="NM_001008520.1"/>
</dbReference>
<dbReference type="FunCoup" id="Q5RK23">
    <property type="interactions" value="196"/>
</dbReference>
<dbReference type="STRING" id="10116.ENSRNOP00000009339"/>
<dbReference type="ESTHER" id="ratno-abhd1">
    <property type="family name" value="abh_upf0017"/>
</dbReference>
<dbReference type="GlyCosmos" id="Q5RK23">
    <property type="glycosylation" value="1 site, No reported glycans"/>
</dbReference>
<dbReference type="GlyGen" id="Q5RK23">
    <property type="glycosylation" value="1 site"/>
</dbReference>
<dbReference type="PhosphoSitePlus" id="Q5RK23"/>
<dbReference type="PaxDb" id="10116-ENSRNOP00000009339"/>
<dbReference type="Ensembl" id="ENSRNOT00000010403.5">
    <property type="protein sequence ID" value="ENSRNOP00000009339.2"/>
    <property type="gene ID" value="ENSRNOG00000025689.4"/>
</dbReference>
<dbReference type="GeneID" id="313917"/>
<dbReference type="KEGG" id="rno:313917"/>
<dbReference type="AGR" id="RGD:1310988"/>
<dbReference type="CTD" id="84696"/>
<dbReference type="RGD" id="1310988">
    <property type="gene designation" value="Abhd1"/>
</dbReference>
<dbReference type="eggNOG" id="KOG1838">
    <property type="taxonomic scope" value="Eukaryota"/>
</dbReference>
<dbReference type="GeneTree" id="ENSGT00950000182902"/>
<dbReference type="HOGENOM" id="CLU_032487_4_0_1"/>
<dbReference type="InParanoid" id="Q5RK23"/>
<dbReference type="OMA" id="MMTTSWG"/>
<dbReference type="OrthoDB" id="247542at2759"/>
<dbReference type="PhylomeDB" id="Q5RK23"/>
<dbReference type="TreeFam" id="TF313195"/>
<dbReference type="PRO" id="PR:Q5RK23"/>
<dbReference type="Proteomes" id="UP000002494">
    <property type="component" value="Chromosome 6"/>
</dbReference>
<dbReference type="Bgee" id="ENSRNOG00000025689">
    <property type="expression patterns" value="Expressed in duodenum and 19 other cell types or tissues"/>
</dbReference>
<dbReference type="GO" id="GO:0016020">
    <property type="term" value="C:membrane"/>
    <property type="evidence" value="ECO:0007669"/>
    <property type="project" value="UniProtKB-SubCell"/>
</dbReference>
<dbReference type="GO" id="GO:0008126">
    <property type="term" value="F:acetylesterase activity"/>
    <property type="evidence" value="ECO:0000318"/>
    <property type="project" value="GO_Central"/>
</dbReference>
<dbReference type="GO" id="GO:0047372">
    <property type="term" value="F:monoacylglycerol lipase activity"/>
    <property type="evidence" value="ECO:0000318"/>
    <property type="project" value="GO_Central"/>
</dbReference>
<dbReference type="GO" id="GO:0051792">
    <property type="term" value="P:medium-chain fatty acid biosynthetic process"/>
    <property type="evidence" value="ECO:0000318"/>
    <property type="project" value="GO_Central"/>
</dbReference>
<dbReference type="GO" id="GO:0051793">
    <property type="term" value="P:medium-chain fatty acid catabolic process"/>
    <property type="evidence" value="ECO:0000318"/>
    <property type="project" value="GO_Central"/>
</dbReference>
<dbReference type="FunFam" id="3.40.50.1820:FF:000167">
    <property type="entry name" value="Abhydrolase domain containing 1"/>
    <property type="match status" value="1"/>
</dbReference>
<dbReference type="Gene3D" id="3.40.50.1820">
    <property type="entry name" value="alpha/beta hydrolase"/>
    <property type="match status" value="1"/>
</dbReference>
<dbReference type="InterPro" id="IPR000073">
    <property type="entry name" value="AB_hydrolase_1"/>
</dbReference>
<dbReference type="InterPro" id="IPR050960">
    <property type="entry name" value="AB_hydrolase_4_sf"/>
</dbReference>
<dbReference type="InterPro" id="IPR029058">
    <property type="entry name" value="AB_hydrolase_fold"/>
</dbReference>
<dbReference type="InterPro" id="IPR012020">
    <property type="entry name" value="ABHD4"/>
</dbReference>
<dbReference type="PANTHER" id="PTHR10794">
    <property type="entry name" value="ABHYDROLASE DOMAIN-CONTAINING PROTEIN"/>
    <property type="match status" value="1"/>
</dbReference>
<dbReference type="PANTHER" id="PTHR10794:SF60">
    <property type="entry name" value="PROTEIN ABHD1"/>
    <property type="match status" value="1"/>
</dbReference>
<dbReference type="Pfam" id="PF00561">
    <property type="entry name" value="Abhydrolase_1"/>
    <property type="match status" value="1"/>
</dbReference>
<dbReference type="PIRSF" id="PIRSF005211">
    <property type="entry name" value="Ab_hydro_YheT"/>
    <property type="match status" value="1"/>
</dbReference>
<dbReference type="SUPFAM" id="SSF53474">
    <property type="entry name" value="alpha/beta-Hydrolases"/>
    <property type="match status" value="1"/>
</dbReference>
<gene>
    <name evidence="4" type="primary">Abhd1</name>
</gene>
<sequence length="412" mass="45557">MEYLHITKMLSSSLSPQNGTWSDAISLLLALGIALYLGYYWACVPQRPRLVAGPQFLAFLEQHCPVTVETFYPTLWCFEGRLQTIFRVLLQSQPVIPYRSEVLQTPDGGQFLLDWAEQPYSSHCPDPTTQPIVLLLPGISGSSQEPYILHLVDQALKDGYRAVVFNNRGCRGEELLTHRAYCASNTEDLETVVKHIKHRYSRAPLLAVGISFGGILVLNYLARTGKAGGLVAGLTMSACWDSFETVDSLETPLNSLLFNQPLTAGLCRLVARNRKSIEKVLDVDFAIKARTIRQLDERYTSVAFGYKDCAAYYHASSPRTKVDAICTPVLCLNAADDPFSPVQALPLQAAQKSPYVALLITARGGHIGFLEGLLPWQHCYMNRVLHQYARAVFQHSVGLPGLGALTPEDGKS</sequence>
<protein>
    <recommendedName>
        <fullName evidence="3">Protein ABHD1</fullName>
        <ecNumber>3.1.1.-</ecNumber>
    </recommendedName>
    <alternativeName>
        <fullName evidence="3">Alpha/beta hydrolase domain-containing protein 1</fullName>
        <shortName evidence="4">Abhydrolase domain-containing protein 1</shortName>
    </alternativeName>
</protein>
<evidence type="ECO:0000250" key="1"/>
<evidence type="ECO:0000255" key="2"/>
<evidence type="ECO:0000305" key="3"/>
<evidence type="ECO:0000312" key="4">
    <source>
        <dbReference type="RGD" id="1310988"/>
    </source>
</evidence>
<keyword id="KW-0325">Glycoprotein</keyword>
<keyword id="KW-0378">Hydrolase</keyword>
<keyword id="KW-0472">Membrane</keyword>
<keyword id="KW-1185">Reference proteome</keyword>
<keyword id="KW-0719">Serine esterase</keyword>
<keyword id="KW-0735">Signal-anchor</keyword>
<keyword id="KW-0812">Transmembrane</keyword>
<keyword id="KW-1133">Transmembrane helix</keyword>